<name>UVRC_RICCN</name>
<accession>Q92HA7</accession>
<sequence length="639" mass="73354">MTLEITGSELIKSKLIDAPERSGVYRMFDVNKQVLYVGKAKNLKKRLTNYIKSNLDNKTLRMIANTCFLEYSITNSEVEALLLEAQLIKKFQPKFNILLKDCKSFPFIKLRLDHDFPQLLKYRGKTLSDGKFFGPFASSVEVNTTLTELQKIFKLRSCTDNYFNSRTRPCLQYEIKRCYAPCVGKINKEDYRDLVTQVKDFLQGRTKELQENLSRKMEELSSQMRFEEAAEIRDRIKALSYVQLKAGVSDVVKDADIIAIVEKNGHYCVEVFLYRAGQACGNIPYFPTATENSTKEEVLEYFLLQFYQKQHVPAAIIINHEINDKENVIEAIKKINNILQINITVPNKGGKAKLVQNAETHALFSLEQYLKKFAKNQEIMFEIKELFGLSEIPERIEIYDNSHIQGKFAVGVMVVAGKVGFDKKEYRVFNVHTPSLVCHSRESGDPKRLMDSCFRGNGIKNCGGDIKGDDYEMLRQVLTRRLTRLRQEPHKLPSLMIIDGGKGHLGVVKEVMDKFEMNIPFVCMSKGVDRNAGFEQFHVIGKEVFTLDKNLPVMKYLQILRDEAHNFAIKNHRLGRSRAIKISRLDDIEGVGETRKKALLHYFGSYKAVCDATIYELAKVNGINKLLAEMIFNVLHRKN</sequence>
<feature type="chain" id="PRO_0000138331" description="UvrABC system protein C">
    <location>
        <begin position="1"/>
        <end position="639"/>
    </location>
</feature>
<feature type="domain" description="GIY-YIG" evidence="1">
    <location>
        <begin position="20"/>
        <end position="97"/>
    </location>
</feature>
<feature type="domain" description="UVR" evidence="1">
    <location>
        <begin position="207"/>
        <end position="242"/>
    </location>
</feature>
<gene>
    <name evidence="1" type="primary">uvrC</name>
    <name type="ordered locus">RC0864</name>
</gene>
<comment type="function">
    <text evidence="1">The UvrABC repair system catalyzes the recognition and processing of DNA lesions. UvrC both incises the 5' and 3' sides of the lesion. The N-terminal half is responsible for the 3' incision and the C-terminal half is responsible for the 5' incision.</text>
</comment>
<comment type="subunit">
    <text evidence="1">Interacts with UvrB in an incision complex.</text>
</comment>
<comment type="subcellular location">
    <subcellularLocation>
        <location evidence="1">Cytoplasm</location>
    </subcellularLocation>
</comment>
<comment type="similarity">
    <text evidence="1">Belongs to the UvrC family.</text>
</comment>
<evidence type="ECO:0000255" key="1">
    <source>
        <dbReference type="HAMAP-Rule" id="MF_00203"/>
    </source>
</evidence>
<dbReference type="EMBL" id="AE006914">
    <property type="protein sequence ID" value="AAL03402.1"/>
    <property type="molecule type" value="Genomic_DNA"/>
</dbReference>
<dbReference type="PIR" id="H97807">
    <property type="entry name" value="H97807"/>
</dbReference>
<dbReference type="RefSeq" id="WP_010977470.1">
    <property type="nucleotide sequence ID" value="NC_003103.1"/>
</dbReference>
<dbReference type="SMR" id="Q92HA7"/>
<dbReference type="GeneID" id="927828"/>
<dbReference type="KEGG" id="rco:RC0864"/>
<dbReference type="PATRIC" id="fig|272944.4.peg.981"/>
<dbReference type="HOGENOM" id="CLU_014841_3_2_5"/>
<dbReference type="Proteomes" id="UP000000816">
    <property type="component" value="Chromosome"/>
</dbReference>
<dbReference type="GO" id="GO:0005737">
    <property type="term" value="C:cytoplasm"/>
    <property type="evidence" value="ECO:0007669"/>
    <property type="project" value="UniProtKB-SubCell"/>
</dbReference>
<dbReference type="GO" id="GO:0009380">
    <property type="term" value="C:excinuclease repair complex"/>
    <property type="evidence" value="ECO:0007669"/>
    <property type="project" value="InterPro"/>
</dbReference>
<dbReference type="GO" id="GO:0003677">
    <property type="term" value="F:DNA binding"/>
    <property type="evidence" value="ECO:0007669"/>
    <property type="project" value="UniProtKB-UniRule"/>
</dbReference>
<dbReference type="GO" id="GO:0009381">
    <property type="term" value="F:excinuclease ABC activity"/>
    <property type="evidence" value="ECO:0007669"/>
    <property type="project" value="UniProtKB-UniRule"/>
</dbReference>
<dbReference type="GO" id="GO:0006289">
    <property type="term" value="P:nucleotide-excision repair"/>
    <property type="evidence" value="ECO:0007669"/>
    <property type="project" value="UniProtKB-UniRule"/>
</dbReference>
<dbReference type="GO" id="GO:0009432">
    <property type="term" value="P:SOS response"/>
    <property type="evidence" value="ECO:0007669"/>
    <property type="project" value="UniProtKB-UniRule"/>
</dbReference>
<dbReference type="CDD" id="cd10434">
    <property type="entry name" value="GIY-YIG_UvrC_Cho"/>
    <property type="match status" value="1"/>
</dbReference>
<dbReference type="FunFam" id="3.40.1440.10:FF:000001">
    <property type="entry name" value="UvrABC system protein C"/>
    <property type="match status" value="1"/>
</dbReference>
<dbReference type="Gene3D" id="1.10.150.20">
    <property type="entry name" value="5' to 3' exonuclease, C-terminal subdomain"/>
    <property type="match status" value="1"/>
</dbReference>
<dbReference type="Gene3D" id="3.40.1440.10">
    <property type="entry name" value="GIY-YIG endonuclease"/>
    <property type="match status" value="1"/>
</dbReference>
<dbReference type="Gene3D" id="4.10.860.10">
    <property type="entry name" value="UVR domain"/>
    <property type="match status" value="1"/>
</dbReference>
<dbReference type="Gene3D" id="3.30.420.340">
    <property type="entry name" value="UvrC, RNAse H endonuclease domain"/>
    <property type="match status" value="1"/>
</dbReference>
<dbReference type="HAMAP" id="MF_00203">
    <property type="entry name" value="UvrC"/>
    <property type="match status" value="1"/>
</dbReference>
<dbReference type="InterPro" id="IPR000305">
    <property type="entry name" value="GIY-YIG_endonuc"/>
</dbReference>
<dbReference type="InterPro" id="IPR035901">
    <property type="entry name" value="GIY-YIG_endonuc_sf"/>
</dbReference>
<dbReference type="InterPro" id="IPR047296">
    <property type="entry name" value="GIY-YIG_UvrC_Cho"/>
</dbReference>
<dbReference type="InterPro" id="IPR010994">
    <property type="entry name" value="RuvA_2-like"/>
</dbReference>
<dbReference type="InterPro" id="IPR001943">
    <property type="entry name" value="UVR_dom"/>
</dbReference>
<dbReference type="InterPro" id="IPR036876">
    <property type="entry name" value="UVR_dom_sf"/>
</dbReference>
<dbReference type="InterPro" id="IPR050066">
    <property type="entry name" value="UvrABC_protein_C"/>
</dbReference>
<dbReference type="InterPro" id="IPR004791">
    <property type="entry name" value="UvrC"/>
</dbReference>
<dbReference type="InterPro" id="IPR001162">
    <property type="entry name" value="UvrC_RNase_H_dom"/>
</dbReference>
<dbReference type="InterPro" id="IPR038476">
    <property type="entry name" value="UvrC_RNase_H_dom_sf"/>
</dbReference>
<dbReference type="NCBIfam" id="TIGR00194">
    <property type="entry name" value="uvrC"/>
    <property type="match status" value="1"/>
</dbReference>
<dbReference type="PANTHER" id="PTHR30562:SF1">
    <property type="entry name" value="UVRABC SYSTEM PROTEIN C"/>
    <property type="match status" value="1"/>
</dbReference>
<dbReference type="PANTHER" id="PTHR30562">
    <property type="entry name" value="UVRC/OXIDOREDUCTASE"/>
    <property type="match status" value="1"/>
</dbReference>
<dbReference type="Pfam" id="PF01541">
    <property type="entry name" value="GIY-YIG"/>
    <property type="match status" value="1"/>
</dbReference>
<dbReference type="Pfam" id="PF14520">
    <property type="entry name" value="HHH_5"/>
    <property type="match status" value="1"/>
</dbReference>
<dbReference type="Pfam" id="PF02151">
    <property type="entry name" value="UVR"/>
    <property type="match status" value="1"/>
</dbReference>
<dbReference type="Pfam" id="PF22920">
    <property type="entry name" value="UvrC_RNaseH"/>
    <property type="match status" value="1"/>
</dbReference>
<dbReference type="Pfam" id="PF08459">
    <property type="entry name" value="UvrC_RNaseH_dom"/>
    <property type="match status" value="2"/>
</dbReference>
<dbReference type="SMART" id="SM00465">
    <property type="entry name" value="GIYc"/>
    <property type="match status" value="1"/>
</dbReference>
<dbReference type="SUPFAM" id="SSF46600">
    <property type="entry name" value="C-terminal UvrC-binding domain of UvrB"/>
    <property type="match status" value="1"/>
</dbReference>
<dbReference type="SUPFAM" id="SSF82771">
    <property type="entry name" value="GIY-YIG endonuclease"/>
    <property type="match status" value="1"/>
</dbReference>
<dbReference type="SUPFAM" id="SSF47781">
    <property type="entry name" value="RuvA domain 2-like"/>
    <property type="match status" value="1"/>
</dbReference>
<dbReference type="PROSITE" id="PS50164">
    <property type="entry name" value="GIY_YIG"/>
    <property type="match status" value="1"/>
</dbReference>
<dbReference type="PROSITE" id="PS50151">
    <property type="entry name" value="UVR"/>
    <property type="match status" value="1"/>
</dbReference>
<dbReference type="PROSITE" id="PS50165">
    <property type="entry name" value="UVRC"/>
    <property type="match status" value="1"/>
</dbReference>
<organism>
    <name type="scientific">Rickettsia conorii (strain ATCC VR-613 / Malish 7)</name>
    <dbReference type="NCBI Taxonomy" id="272944"/>
    <lineage>
        <taxon>Bacteria</taxon>
        <taxon>Pseudomonadati</taxon>
        <taxon>Pseudomonadota</taxon>
        <taxon>Alphaproteobacteria</taxon>
        <taxon>Rickettsiales</taxon>
        <taxon>Rickettsiaceae</taxon>
        <taxon>Rickettsieae</taxon>
        <taxon>Rickettsia</taxon>
        <taxon>spotted fever group</taxon>
    </lineage>
</organism>
<proteinExistence type="inferred from homology"/>
<keyword id="KW-0963">Cytoplasm</keyword>
<keyword id="KW-0227">DNA damage</keyword>
<keyword id="KW-0228">DNA excision</keyword>
<keyword id="KW-0234">DNA repair</keyword>
<keyword id="KW-0267">Excision nuclease</keyword>
<keyword id="KW-0742">SOS response</keyword>
<protein>
    <recommendedName>
        <fullName evidence="1">UvrABC system protein C</fullName>
        <shortName evidence="1">Protein UvrC</shortName>
    </recommendedName>
    <alternativeName>
        <fullName evidence="1">Excinuclease ABC subunit C</fullName>
    </alternativeName>
</protein>
<reference key="1">
    <citation type="journal article" date="2001" name="Science">
        <title>Mechanisms of evolution in Rickettsia conorii and R. prowazekii.</title>
        <authorList>
            <person name="Ogata H."/>
            <person name="Audic S."/>
            <person name="Renesto-Audiffren P."/>
            <person name="Fournier P.-E."/>
            <person name="Barbe V."/>
            <person name="Samson D."/>
            <person name="Roux V."/>
            <person name="Cossart P."/>
            <person name="Weissenbach J."/>
            <person name="Claverie J.-M."/>
            <person name="Raoult D."/>
        </authorList>
    </citation>
    <scope>NUCLEOTIDE SEQUENCE [LARGE SCALE GENOMIC DNA]</scope>
    <source>
        <strain>ATCC VR-613 / Malish 7</strain>
    </source>
</reference>